<reference key="1">
    <citation type="submission" date="2006-08" db="EMBL/GenBank/DDBJ databases">
        <authorList>
            <consortium name="NIH - Mammalian Gene Collection (MGC) project"/>
        </authorList>
    </citation>
    <scope>NUCLEOTIDE SEQUENCE [LARGE SCALE MRNA]</scope>
    <source>
        <strain>Hereford</strain>
        <tissue>Fetal muscle</tissue>
    </source>
</reference>
<accession>Q0P570</accession>
<gene>
    <name type="primary">MVD</name>
</gene>
<organism>
    <name type="scientific">Bos taurus</name>
    <name type="common">Bovine</name>
    <dbReference type="NCBI Taxonomy" id="9913"/>
    <lineage>
        <taxon>Eukaryota</taxon>
        <taxon>Metazoa</taxon>
        <taxon>Chordata</taxon>
        <taxon>Craniata</taxon>
        <taxon>Vertebrata</taxon>
        <taxon>Euteleostomi</taxon>
        <taxon>Mammalia</taxon>
        <taxon>Eutheria</taxon>
        <taxon>Laurasiatheria</taxon>
        <taxon>Artiodactyla</taxon>
        <taxon>Ruminantia</taxon>
        <taxon>Pecora</taxon>
        <taxon>Bovidae</taxon>
        <taxon>Bovinae</taxon>
        <taxon>Bos</taxon>
    </lineage>
</organism>
<feature type="initiator methionine" description="Removed" evidence="2">
    <location>
        <position position="1"/>
    </location>
</feature>
<feature type="chain" id="PRO_0000310437" description="Diphosphomevalonate decarboxylase">
    <location>
        <begin position="2"/>
        <end position="400"/>
    </location>
</feature>
<feature type="binding site" evidence="1">
    <location>
        <begin position="23"/>
        <end position="26"/>
    </location>
    <ligand>
        <name>(R)-5-diphosphomevalonate</name>
        <dbReference type="ChEBI" id="CHEBI:57557"/>
    </ligand>
</feature>
<feature type="binding site" evidence="1">
    <location>
        <position position="78"/>
    </location>
    <ligand>
        <name>(R)-5-diphosphomevalonate</name>
        <dbReference type="ChEBI" id="CHEBI:57557"/>
    </ligand>
</feature>
<feature type="binding site" evidence="1">
    <location>
        <begin position="156"/>
        <end position="161"/>
    </location>
    <ligand>
        <name>(R)-5-diphosphomevalonate</name>
        <dbReference type="ChEBI" id="CHEBI:57557"/>
    </ligand>
</feature>
<feature type="binding site" evidence="1">
    <location>
        <position position="212"/>
    </location>
    <ligand>
        <name>(R)-5-diphosphomevalonate</name>
        <dbReference type="ChEBI" id="CHEBI:57557"/>
    </ligand>
</feature>
<feature type="modified residue" description="N-acetylalanine" evidence="2">
    <location>
        <position position="2"/>
    </location>
</feature>
<keyword id="KW-0007">Acetylation</keyword>
<keyword id="KW-0067">ATP-binding</keyword>
<keyword id="KW-0152">Cholesterol biosynthesis</keyword>
<keyword id="KW-0153">Cholesterol metabolism</keyword>
<keyword id="KW-0963">Cytoplasm</keyword>
<keyword id="KW-0444">Lipid biosynthesis</keyword>
<keyword id="KW-0443">Lipid metabolism</keyword>
<keyword id="KW-0456">Lyase</keyword>
<keyword id="KW-0547">Nucleotide-binding</keyword>
<keyword id="KW-1185">Reference proteome</keyword>
<keyword id="KW-0752">Steroid biosynthesis</keyword>
<keyword id="KW-0753">Steroid metabolism</keyword>
<keyword id="KW-0756">Sterol biosynthesis</keyword>
<keyword id="KW-1207">Sterol metabolism</keyword>
<comment type="function">
    <text evidence="2">Catalyzes the ATP dependent decarboxylation of (R)-5-diphosphomevalonate to form isopentenyl diphosphate (IPP). Functions in the mevalonate (MVA) pathway leading to isopentenyl diphosphate (IPP), a key precursor for the biosynthesis of isoprenoids and sterol synthesis.</text>
</comment>
<comment type="catalytic activity">
    <reaction evidence="2">
        <text>(R)-5-diphosphomevalonate + ATP = isopentenyl diphosphate + ADP + phosphate + CO2</text>
        <dbReference type="Rhea" id="RHEA:23732"/>
        <dbReference type="ChEBI" id="CHEBI:16526"/>
        <dbReference type="ChEBI" id="CHEBI:30616"/>
        <dbReference type="ChEBI" id="CHEBI:43474"/>
        <dbReference type="ChEBI" id="CHEBI:57557"/>
        <dbReference type="ChEBI" id="CHEBI:128769"/>
        <dbReference type="ChEBI" id="CHEBI:456216"/>
        <dbReference type="EC" id="4.1.1.33"/>
    </reaction>
</comment>
<comment type="pathway">
    <text evidence="3">Steroid biosynthesis; cholesterol biosynthesis.</text>
</comment>
<comment type="subunit">
    <text evidence="2">Homodimer.</text>
</comment>
<comment type="subcellular location">
    <subcellularLocation>
        <location evidence="2">Cytoplasm</location>
    </subcellularLocation>
</comment>
<comment type="similarity">
    <text evidence="3">Belongs to the diphosphomevalonate decarboxylase family.</text>
</comment>
<comment type="caution">
    <text evidence="2">Was originally thought to be located in the peroxisome. However, was later shown to be cytosolic.</text>
</comment>
<evidence type="ECO:0000250" key="1">
    <source>
        <dbReference type="UniProtKB" id="O23722"/>
    </source>
</evidence>
<evidence type="ECO:0000250" key="2">
    <source>
        <dbReference type="UniProtKB" id="P53602"/>
    </source>
</evidence>
<evidence type="ECO:0000305" key="3"/>
<proteinExistence type="evidence at transcript level"/>
<name>MVD1_BOVIN</name>
<dbReference type="EC" id="4.1.1.33" evidence="2"/>
<dbReference type="EMBL" id="BC120432">
    <property type="protein sequence ID" value="AAI20433.1"/>
    <property type="molecule type" value="mRNA"/>
</dbReference>
<dbReference type="RefSeq" id="NP_001068892.1">
    <property type="nucleotide sequence ID" value="NM_001075424.1"/>
</dbReference>
<dbReference type="SMR" id="Q0P570"/>
<dbReference type="FunCoup" id="Q0P570">
    <property type="interactions" value="1021"/>
</dbReference>
<dbReference type="STRING" id="9913.ENSBTAP00000015994"/>
<dbReference type="PaxDb" id="9913-ENSBTAP00000015994"/>
<dbReference type="PeptideAtlas" id="Q0P570"/>
<dbReference type="GeneID" id="509958"/>
<dbReference type="KEGG" id="bta:509958"/>
<dbReference type="CTD" id="4597"/>
<dbReference type="VEuPathDB" id="HostDB:ENSBTAG00000012059"/>
<dbReference type="eggNOG" id="KOG2833">
    <property type="taxonomic scope" value="Eukaryota"/>
</dbReference>
<dbReference type="HOGENOM" id="CLU_040369_4_4_1"/>
<dbReference type="InParanoid" id="Q0P570"/>
<dbReference type="OMA" id="LTLHAMM"/>
<dbReference type="OrthoDB" id="10253702at2759"/>
<dbReference type="TreeFam" id="TF105952"/>
<dbReference type="Reactome" id="R-BTA-191273">
    <property type="pathway name" value="Cholesterol biosynthesis"/>
</dbReference>
<dbReference type="Reactome" id="R-BTA-446199">
    <property type="pathway name" value="Synthesis of Dolichyl-phosphate"/>
</dbReference>
<dbReference type="UniPathway" id="UPA00063"/>
<dbReference type="Proteomes" id="UP000009136">
    <property type="component" value="Chromosome 18"/>
</dbReference>
<dbReference type="Bgee" id="ENSBTAG00000012059">
    <property type="expression patterns" value="Expressed in diaphragm and 106 other cell types or tissues"/>
</dbReference>
<dbReference type="GO" id="GO:0005829">
    <property type="term" value="C:cytosol"/>
    <property type="evidence" value="ECO:0000250"/>
    <property type="project" value="UniProtKB"/>
</dbReference>
<dbReference type="GO" id="GO:0005524">
    <property type="term" value="F:ATP binding"/>
    <property type="evidence" value="ECO:0007669"/>
    <property type="project" value="UniProtKB-KW"/>
</dbReference>
<dbReference type="GO" id="GO:0004163">
    <property type="term" value="F:diphosphomevalonate decarboxylase activity"/>
    <property type="evidence" value="ECO:0000250"/>
    <property type="project" value="UniProtKB"/>
</dbReference>
<dbReference type="GO" id="GO:0030544">
    <property type="term" value="F:Hsp70 protein binding"/>
    <property type="evidence" value="ECO:0000250"/>
    <property type="project" value="UniProtKB"/>
</dbReference>
<dbReference type="GO" id="GO:0042803">
    <property type="term" value="F:protein homodimerization activity"/>
    <property type="evidence" value="ECO:0000250"/>
    <property type="project" value="UniProtKB"/>
</dbReference>
<dbReference type="GO" id="GO:0006695">
    <property type="term" value="P:cholesterol biosynthetic process"/>
    <property type="evidence" value="ECO:0007669"/>
    <property type="project" value="UniProtKB-UniPathway"/>
</dbReference>
<dbReference type="GO" id="GO:0019287">
    <property type="term" value="P:isopentenyl diphosphate biosynthetic process, mevalonate pathway"/>
    <property type="evidence" value="ECO:0000318"/>
    <property type="project" value="GO_Central"/>
</dbReference>
<dbReference type="GO" id="GO:0008299">
    <property type="term" value="P:isoprenoid biosynthetic process"/>
    <property type="evidence" value="ECO:0000250"/>
    <property type="project" value="UniProtKB"/>
</dbReference>
<dbReference type="GO" id="GO:0008284">
    <property type="term" value="P:positive regulation of cell population proliferation"/>
    <property type="evidence" value="ECO:0000250"/>
    <property type="project" value="UniProtKB"/>
</dbReference>
<dbReference type="FunFam" id="3.30.230.10:FF:000018">
    <property type="entry name" value="Diphosphomevalonate decarboxylase"/>
    <property type="match status" value="1"/>
</dbReference>
<dbReference type="FunFam" id="3.30.70.890:FF:000005">
    <property type="entry name" value="Diphosphomevalonate decarboxylase"/>
    <property type="match status" value="1"/>
</dbReference>
<dbReference type="Gene3D" id="3.30.230.10">
    <property type="match status" value="1"/>
</dbReference>
<dbReference type="Gene3D" id="3.30.70.890">
    <property type="entry name" value="GHMP kinase, C-terminal domain"/>
    <property type="match status" value="1"/>
</dbReference>
<dbReference type="InterPro" id="IPR036554">
    <property type="entry name" value="GHMP_kinase_C_sf"/>
</dbReference>
<dbReference type="InterPro" id="IPR005935">
    <property type="entry name" value="Mev_decarb"/>
</dbReference>
<dbReference type="InterPro" id="IPR029765">
    <property type="entry name" value="Mev_diP_decarb"/>
</dbReference>
<dbReference type="InterPro" id="IPR053859">
    <property type="entry name" value="MVD-like_N"/>
</dbReference>
<dbReference type="InterPro" id="IPR041431">
    <property type="entry name" value="Mvd1_C"/>
</dbReference>
<dbReference type="InterPro" id="IPR020568">
    <property type="entry name" value="Ribosomal_Su5_D2-typ_SF"/>
</dbReference>
<dbReference type="InterPro" id="IPR014721">
    <property type="entry name" value="Ribsml_uS5_D2-typ_fold_subgr"/>
</dbReference>
<dbReference type="NCBIfam" id="TIGR01240">
    <property type="entry name" value="mevDPdecarb"/>
    <property type="match status" value="1"/>
</dbReference>
<dbReference type="PANTHER" id="PTHR10977">
    <property type="entry name" value="DIPHOSPHOMEVALONATE DECARBOXYLASE"/>
    <property type="match status" value="1"/>
</dbReference>
<dbReference type="PANTHER" id="PTHR10977:SF3">
    <property type="entry name" value="DIPHOSPHOMEVALONATE DECARBOXYLASE"/>
    <property type="match status" value="1"/>
</dbReference>
<dbReference type="Pfam" id="PF18376">
    <property type="entry name" value="MDD_C"/>
    <property type="match status" value="1"/>
</dbReference>
<dbReference type="Pfam" id="PF22700">
    <property type="entry name" value="MVD-like_N"/>
    <property type="match status" value="1"/>
</dbReference>
<dbReference type="PIRSF" id="PIRSF015950">
    <property type="entry name" value="Mev_P_decrbx"/>
    <property type="match status" value="1"/>
</dbReference>
<dbReference type="SUPFAM" id="SSF55060">
    <property type="entry name" value="GHMP Kinase, C-terminal domain"/>
    <property type="match status" value="1"/>
</dbReference>
<dbReference type="SUPFAM" id="SSF54211">
    <property type="entry name" value="Ribosomal protein S5 domain 2-like"/>
    <property type="match status" value="1"/>
</dbReference>
<sequence>MASEKPIVVVTCTAPVNIAVVKYWGKRDEELILPINSSLSVTLHQDQLKTTTTAAISRDFTEDRIWLNGREEDMGHPRLQACLREIRRLARKRRSDGHEDPLPLSLSYKVHVASENNFPTAAGLASSAAGYACLAYTLARVYGVDSDLSEVARRGSGSACRSLYGGFVEWQMGERPDGKDSVACQVAPESHWPELRVLILVVSAERKPMGSTAGMQTSVETSALLKFRAEALVPPRMAEMTRCIRERNFQAFGQLTMKDSNQFHATCLDTFPPISYLSDTSRRIIQLVHRFNAHHGQTKVAYTFDAGPNAVVFTLDDTVAEFVAAVRHSFPPESNGDKFLKGLPVEPVLLSDELKAVLGMDPVPGSIRYIIATQVGPGPQVLDDPGAHLLGPDGLPKPAA</sequence>
<protein>
    <recommendedName>
        <fullName>Diphosphomevalonate decarboxylase</fullName>
        <ecNumber evidence="2">4.1.1.33</ecNumber>
    </recommendedName>
    <alternativeName>
        <fullName>Mevalonate (diphospho)decarboxylase</fullName>
        <shortName>MDDase</shortName>
    </alternativeName>
    <alternativeName>
        <fullName>Mevalonate pyrophosphate decarboxylase</fullName>
    </alternativeName>
</protein>